<sequence>MAGAASPCANGCGPSAPSDAEVVHLCRSLEVGTVMTLFYSKKSQRPERKTFQVKLETRQITWSRGADKIEGAIDIREIKEIRPGKTSRDFDRYQEDPAFRPDQSHCFVILYGMEFRLKTLSLQATSEDEVNMWIRGLTWLMEDTLQAATPLQIERWLRKQFYSVDRNREDRISAKDLKNMLSQVNYRVPNMRFLRERLTDLEQRTSDITYGQFAQLYRSLMYSAQKTMDLPFLEASALRAGERPELCRVSLPEFQQFLLEYQGELWAVDRLQVQEFMLSFLRDPLREIEEPYFFLDEFVTFLFSKENSIWNSQLDEVCPDTMNNPLSHYWISSSHNTYLTGDQFSSESSLEAYARCLRMGCRCIELDCWDGPDGMPVIYHGHTLTTKIKFSDVLHTIKEHAFVASEYPVILSIEDHCSIAQQRNMAQYFKKVLGDTLLTKPVDIAADGLPSPNQLKRKILIKHKKLAEGSAYEEVPTSVMYSENDISNSIKNGILYLEDPVNHEWYPHYFVLTSSKIYYSEETSSDQGNEDEEEPKEASGSTELHSNEKWFHGKLGAGRDGRHIAERLLTEYCIETGAPDGSFLVRESETFVGDYTLSFWRNGKVQHCRIHSRQDAGTPKFFLTDNLVFDSLYDLITHYQQVPLRCNEFEMRLSEPVPQTNAHESKEWYHASLTRAQAEHMLMRVPRDGAFLVRKRNEPNSYAISFRAEGKIKHCRVQQEGQTVMLGNSEFDSLVDLISYYEKHPLYRKMKLRYPINEEALEKIGTAEPDYGALYEGRNPGFYVEANPMPTFKCAVKALFDYKAQREDELTFTKSAIIQNVEKQEGGWWRGDYGGKKQLWFPSNYVEEMVSPAALEPEREHLDENSPLGDLLRGVLDVPACQIAVRPEGKNNRLFVFSISMASVAHWSLDVAADSQEELQDWVKKIREVAQTADARLTEGKMMERRKKIALELSELVVYCRPVPFDEEKIGTERACYRDMSSFPETKAEKYVNKAKGKKFLQYNRLQLSRIYPKGQRLDSSNYDPLPMWICGSQLVALNFQTPDKPMQMNQALFLAGGHCGYVLQPSVMRDEAFDPFDKSSLRGLEPCAICIEVLGARHLPKNGRGIVCPFVEIEVAGAEYDSIKQKTEFVVDNGLNPVWPAKPFHFQISNPEFAFLRFVVYEEDMFSDQNFLAQATFPVKGLKTGYRAVPLKNNYSEGLELASLLVKIDVFPAKQENGDLSPFGGASLRERSCDASGPLFHGRAREGSFEARYQQPFEDFRISQEHLADHFDGRDRRTPRRTRVNGDNRL</sequence>
<evidence type="ECO:0000250" key="1"/>
<evidence type="ECO:0000250" key="2">
    <source>
        <dbReference type="UniProtKB" id="P10686"/>
    </source>
</evidence>
<evidence type="ECO:0000250" key="3">
    <source>
        <dbReference type="UniProtKB" id="P19174"/>
    </source>
</evidence>
<evidence type="ECO:0000250" key="4">
    <source>
        <dbReference type="UniProtKB" id="Q62077"/>
    </source>
</evidence>
<evidence type="ECO:0000255" key="5">
    <source>
        <dbReference type="PROSITE-ProRule" id="PRU00041"/>
    </source>
</evidence>
<evidence type="ECO:0000255" key="6">
    <source>
        <dbReference type="PROSITE-ProRule" id="PRU00145"/>
    </source>
</evidence>
<evidence type="ECO:0000255" key="7">
    <source>
        <dbReference type="PROSITE-ProRule" id="PRU00191"/>
    </source>
</evidence>
<evidence type="ECO:0000255" key="8">
    <source>
        <dbReference type="PROSITE-ProRule" id="PRU00192"/>
    </source>
</evidence>
<evidence type="ECO:0000255" key="9">
    <source>
        <dbReference type="PROSITE-ProRule" id="PRU00270"/>
    </source>
</evidence>
<evidence type="ECO:0000255" key="10">
    <source>
        <dbReference type="PROSITE-ProRule" id="PRU00271"/>
    </source>
</evidence>
<evidence type="ECO:0000255" key="11">
    <source>
        <dbReference type="PROSITE-ProRule" id="PRU00448"/>
    </source>
</evidence>
<evidence type="ECO:0000256" key="12">
    <source>
        <dbReference type="SAM" id="MobiDB-lite"/>
    </source>
</evidence>
<evidence type="ECO:0000269" key="13">
    <source>
    </source>
</evidence>
<evidence type="ECO:0000269" key="14">
    <source>
    </source>
</evidence>
<evidence type="ECO:0000269" key="15">
    <source>
    </source>
</evidence>
<evidence type="ECO:0007829" key="16">
    <source>
        <dbReference type="PDB" id="2FCI"/>
    </source>
</evidence>
<evidence type="ECO:0007829" key="17">
    <source>
        <dbReference type="PDB" id="2PLD"/>
    </source>
</evidence>
<evidence type="ECO:0007829" key="18">
    <source>
        <dbReference type="PDB" id="2PLE"/>
    </source>
</evidence>
<evidence type="ECO:0007829" key="19">
    <source>
        <dbReference type="PDB" id="5TNW"/>
    </source>
</evidence>
<organism>
    <name type="scientific">Bos taurus</name>
    <name type="common">Bovine</name>
    <dbReference type="NCBI Taxonomy" id="9913"/>
    <lineage>
        <taxon>Eukaryota</taxon>
        <taxon>Metazoa</taxon>
        <taxon>Chordata</taxon>
        <taxon>Craniata</taxon>
        <taxon>Vertebrata</taxon>
        <taxon>Euteleostomi</taxon>
        <taxon>Mammalia</taxon>
        <taxon>Eutheria</taxon>
        <taxon>Laurasiatheria</taxon>
        <taxon>Artiodactyla</taxon>
        <taxon>Ruminantia</taxon>
        <taxon>Pecora</taxon>
        <taxon>Bovidae</taxon>
        <taxon>Bovinae</taxon>
        <taxon>Bos</taxon>
    </lineage>
</organism>
<accession>P08487</accession>
<comment type="function">
    <text evidence="2 3 4">Mediates the production of the second messenger molecules diacylglycerol (DAG) and inositol 1,4,5-trisphosphate (IP3). Plays an important role in the regulation of intracellular signaling cascades. Becomes activated in response to ligand-mediated activation of receptor-type tyrosine kinases, such as PDGFRA, PDGFRB, EGFR, FGFR1, FGFR2, FGFR3 and FGFR4 (By similarity). Plays a role in actin reorganization and cell migration (By similarity). Guanine nucleotide exchange factor that binds the GTPase DNM1 and catalyzes the dissociation of GDP, allowing a GTP molecule to bind in its place, therefore enhancing DNM1-dependent endocytosis (By similarity).</text>
</comment>
<comment type="catalytic activity">
    <reaction evidence="2">
        <text>a 1,2-diacyl-sn-glycero-3-phospho-(1D-myo-inositol-4,5-bisphosphate) + H2O = 1D-myo-inositol 1,4,5-trisphosphate + a 1,2-diacyl-sn-glycerol + H(+)</text>
        <dbReference type="Rhea" id="RHEA:33179"/>
        <dbReference type="ChEBI" id="CHEBI:15377"/>
        <dbReference type="ChEBI" id="CHEBI:15378"/>
        <dbReference type="ChEBI" id="CHEBI:17815"/>
        <dbReference type="ChEBI" id="CHEBI:58456"/>
        <dbReference type="ChEBI" id="CHEBI:203600"/>
        <dbReference type="EC" id="3.1.4.11"/>
    </reaction>
    <physiologicalReaction direction="left-to-right" evidence="2">
        <dbReference type="Rhea" id="RHEA:33180"/>
    </physiologicalReaction>
</comment>
<comment type="catalytic activity">
    <reaction evidence="2">
        <text>a 1,2-diacyl-sn-glycero-3-phospho-(1D-myo-inositol) + H2O = 1D-myo-inositol 1-phosphate + a 1,2-diacyl-sn-glycerol + H(+)</text>
        <dbReference type="Rhea" id="RHEA:43484"/>
        <dbReference type="ChEBI" id="CHEBI:15377"/>
        <dbReference type="ChEBI" id="CHEBI:15378"/>
        <dbReference type="ChEBI" id="CHEBI:17815"/>
        <dbReference type="ChEBI" id="CHEBI:57880"/>
        <dbReference type="ChEBI" id="CHEBI:58433"/>
    </reaction>
    <physiologicalReaction direction="left-to-right" evidence="2">
        <dbReference type="Rhea" id="RHEA:43485"/>
    </physiologicalReaction>
</comment>
<comment type="cofactor">
    <cofactor evidence="2">
        <name>Ca(2+)</name>
        <dbReference type="ChEBI" id="CHEBI:29108"/>
    </cofactor>
</comment>
<comment type="activity regulation">
    <text evidence="3">Activated by phosphorylation on tyrosine residues.</text>
</comment>
<comment type="subunit">
    <text evidence="2 3 4">Interacts with AGAP2 via its SH3 domain. Interacts (via SH2 domain) with RET. Interacts with FLT1 (tyrosine-phosphorylated) (By similarity). Interacts (via SH2 domain) with FGFR1, FGFR2, FGFR3 and FGFR4 (phosphorylated). Interacts with LAT (phosphorylated) upon TCR activation. Interacts (via SH3 domain) with the Pro-rich domain of TNK1. Associates with BLNK, VAV1, GRB2 and NCK1 in a B-cell antigen receptor-dependent fashion. Interacts with CBLB in activated T-cells; which inhibits phosphorylation. Interacts with SHB. Interacts (via SH3 domain) with the Arg/Gly-rich-flanked Pro-rich domains of KHDRBS1/SAM68. This interaction is selectively regulated by arginine methylation of KHDRBS1/SAM68. Interacts with INPP5D/SHIP1, THEMIS and CLNK (By similarity). Interacts with AXL, FLT4 and KIT. Interacts with RALGPS1. Interacts (via the SH2 domains) with VIL1 (phosphorylated at C-terminus tyrosine phosphorylation sites). Interacts (via SH2 domain) with PDGFRA and PDGFRB (tyrosine phosphorylated). Interacts with PIP5K1C (By similarity). Interacts with NTRK1 and NTRK2 (phosphorylated upon ligand-binding). Interacts with SYK; activates PLCG1. Interacts with GRB2, LAT and THEMIS upon TCR activation in thymocytes (By similarity). Interacts with TESPA1; the association is increased with prolonged stimulation of the TCR and may facilitate the assembly of the LAT signalosome (By similarity). Interacts (via C-terminal proline-rich domain (PRD)) with PLCG1 (via SH3 domain); this interaction leads to guanine nucleotide exchange from PlCG1 to DNM1 and enhances DNM1-dependent endocytosis (By similarity).</text>
</comment>
<comment type="interaction">
    <interactant intactId="EBI-8013886">
        <id>P08487</id>
    </interactant>
    <interactant intactId="EBI-518228">
        <id>P22681</id>
        <label>CBL</label>
    </interactant>
    <organismsDiffer>true</organismsDiffer>
    <experiments>3</experiments>
</comment>
<comment type="interaction">
    <interactant intactId="EBI-8013886">
        <id>P08487</id>
    </interactant>
    <interactant intactId="EBI-647969">
        <id>Q03526</id>
        <label>Itk</label>
    </interactant>
    <organismsDiffer>true</organismsDiffer>
    <experiments>4</experiments>
</comment>
<comment type="interaction">
    <interactant intactId="EBI-8013886">
        <id>P08487</id>
    </interactant>
    <interactant intactId="EBI-8070286">
        <id>O43561-2</id>
        <label>LAT</label>
    </interactant>
    <organismsDiffer>true</organismsDiffer>
    <experiments>4</experiments>
</comment>
<comment type="interaction">
    <interactant intactId="EBI-8013886">
        <id>P08487</id>
    </interactant>
    <interactant intactId="EBI-346946">
        <id>Q13094</id>
        <label>LCP2</label>
    </interactant>
    <organismsDiffer>true</organismsDiffer>
    <experiments>5</experiments>
</comment>
<comment type="interaction">
    <interactant intactId="EBI-8013886">
        <id>P08487</id>
    </interactant>
    <interactant intactId="EBI-641237">
        <id>P09619</id>
        <label>PDGFRB</label>
    </interactant>
    <organismsDiffer>true</organismsDiffer>
    <experiments>3</experiments>
</comment>
<comment type="interaction">
    <interactant intactId="EBI-8013886">
        <id>P08487</id>
    </interactant>
    <interactant intactId="EBI-300116">
        <id>P48025</id>
        <label>Syk</label>
    </interactant>
    <organismsDiffer>true</organismsDiffer>
    <experiments>4</experiments>
</comment>
<comment type="interaction">
    <interactant intactId="EBI-8013886">
        <id>P08487</id>
    </interactant>
    <interactant intactId="EBI-625518">
        <id>P15498</id>
        <label>VAV1</label>
    </interactant>
    <organismsDiffer>true</organismsDiffer>
    <experiments>4</experiments>
</comment>
<comment type="subcellular location">
    <subcellularLocation>
        <location evidence="3">Cell projection</location>
        <location evidence="3">Lamellipodium</location>
    </subcellularLocation>
    <subcellularLocation>
        <location evidence="3">Cell projection</location>
        <location evidence="3">Ruffle</location>
    </subcellularLocation>
    <text evidence="3">Rapidly redistributed to ruffles and lamellipodia structures in response to epidermal growth factor (EGF) treatment.</text>
</comment>
<comment type="domain">
    <text evidence="3 4">The SH3 domain mediates interaction with CLNK (By similarity). The SH3 domain also mediates interaction with RALGPS1 (By similarity).</text>
</comment>
<comment type="PTM">
    <text evidence="4">Ubiquitinated by CBLB in activated T-cells.</text>
</comment>
<comment type="PTM">
    <text evidence="3 4">Tyrosine phosphorylated in response to signaling via activated FLT3, KIT and PDGFRA (By similarity). Tyrosine phosphorylated by activated FGFR1, FGFR2, FGFR3 and FGFR4. Tyrosine phosphorylated by activated FLT1 and KDR. Tyrosine phosphorylated by activated PDGFRB. The receptor-mediated activation of PLCG1 involves its phosphorylation by tyrosine kinases, in response to ligation of a variety of growth factor receptors and immune system receptors. For instance, SYK phosphorylates and activates PLCG1 in response to ligation of the B-cell receptor. May be dephosphorylated by PTPRJ. Phosphorylated by ITK and TXK on Tyr-783 upon TCR activation in T-cells (By similarity).</text>
</comment>
<feature type="initiator methionine" description="Removed" evidence="3">
    <location>
        <position position="1"/>
    </location>
</feature>
<feature type="chain" id="PRO_0000088497" description="1-phosphatidylinositol 4,5-bisphosphate phosphodiesterase gamma-1">
    <location>
        <begin position="2"/>
        <end position="1291"/>
    </location>
</feature>
<feature type="domain" description="PH 1" evidence="6">
    <location>
        <begin position="27"/>
        <end position="142"/>
    </location>
</feature>
<feature type="domain" description="EF-hand" evidence="11">
    <location>
        <begin position="152"/>
        <end position="187"/>
    </location>
</feature>
<feature type="domain" description="PI-PLC X-box" evidence="9">
    <location>
        <begin position="320"/>
        <end position="464"/>
    </location>
</feature>
<feature type="domain" description="PH 2; first part" evidence="6">
    <location>
        <begin position="489"/>
        <end position="523"/>
    </location>
</feature>
<feature type="domain" description="SH2 1" evidence="7">
    <location>
        <begin position="550"/>
        <end position="657"/>
    </location>
</feature>
<feature type="domain" description="SH2 2" evidence="7">
    <location>
        <begin position="668"/>
        <end position="756"/>
    </location>
</feature>
<feature type="domain" description="SH3" evidence="8">
    <location>
        <begin position="791"/>
        <end position="851"/>
    </location>
</feature>
<feature type="domain" description="PH 2; second part" evidence="6">
    <location>
        <begin position="895"/>
        <end position="931"/>
    </location>
</feature>
<feature type="domain" description="PI-PLC Y-box" evidence="10">
    <location>
        <begin position="953"/>
        <end position="1070"/>
    </location>
</feature>
<feature type="domain" description="C2" evidence="5">
    <location>
        <begin position="1071"/>
        <end position="1194"/>
    </location>
</feature>
<feature type="region of interest" description="Disordered" evidence="12">
    <location>
        <begin position="522"/>
        <end position="544"/>
    </location>
</feature>
<feature type="region of interest" description="Disordered" evidence="12">
    <location>
        <begin position="1271"/>
        <end position="1291"/>
    </location>
</feature>
<feature type="active site" evidence="9">
    <location>
        <position position="335"/>
    </location>
</feature>
<feature type="active site" evidence="9">
    <location>
        <position position="380"/>
    </location>
</feature>
<feature type="binding site" evidence="11">
    <location>
        <position position="165"/>
    </location>
    <ligand>
        <name>Ca(2+)</name>
        <dbReference type="ChEBI" id="CHEBI:29108"/>
    </ligand>
</feature>
<feature type="binding site" evidence="11">
    <location>
        <position position="167"/>
    </location>
    <ligand>
        <name>Ca(2+)</name>
        <dbReference type="ChEBI" id="CHEBI:29108"/>
    </ligand>
</feature>
<feature type="binding site" evidence="11">
    <location>
        <position position="169"/>
    </location>
    <ligand>
        <name>Ca(2+)</name>
        <dbReference type="ChEBI" id="CHEBI:29108"/>
    </ligand>
</feature>
<feature type="binding site" evidence="11">
    <location>
        <position position="171"/>
    </location>
    <ligand>
        <name>Ca(2+)</name>
        <dbReference type="ChEBI" id="CHEBI:29108"/>
    </ligand>
</feature>
<feature type="binding site" evidence="11">
    <location>
        <position position="176"/>
    </location>
    <ligand>
        <name>Ca(2+)</name>
        <dbReference type="ChEBI" id="CHEBI:29108"/>
    </ligand>
</feature>
<feature type="modified residue" description="N-acetylalanine" evidence="3">
    <location>
        <position position="2"/>
    </location>
</feature>
<feature type="modified residue" description="Phosphotyrosine" evidence="4">
    <location>
        <position position="506"/>
    </location>
</feature>
<feature type="modified residue" description="Phosphotyrosine; by SYK" evidence="13 14">
    <location>
        <position position="771"/>
    </location>
</feature>
<feature type="modified residue" description="Phosphotyrosine" evidence="3">
    <location>
        <position position="775"/>
    </location>
</feature>
<feature type="modified residue" description="Phosphotyrosine" evidence="13 14 15">
    <location>
        <position position="783"/>
    </location>
</feature>
<feature type="modified residue" description="Phosphotyrosine; by ITK, SYK and TXK" evidence="1">
    <location>
        <position position="783"/>
    </location>
</feature>
<feature type="modified residue" description="Phosphotyrosine" evidence="4">
    <location>
        <position position="977"/>
    </location>
</feature>
<feature type="modified residue" description="Phosphoserine" evidence="3">
    <location>
        <position position="1222"/>
    </location>
</feature>
<feature type="modified residue" description="Phosphoserine" evidence="3">
    <location>
        <position position="1228"/>
    </location>
</feature>
<feature type="modified residue" description="Phosphoserine" evidence="3">
    <location>
        <position position="1249"/>
    </location>
</feature>
<feature type="modified residue" description="Phosphotyrosine" evidence="13 14 15">
    <location>
        <position position="1254"/>
    </location>
</feature>
<feature type="modified residue" description="Phosphoserine" evidence="3">
    <location>
        <position position="1264"/>
    </location>
</feature>
<feature type="helix" evidence="19">
    <location>
        <begin position="663"/>
        <end position="665"/>
    </location>
</feature>
<feature type="strand" evidence="19">
    <location>
        <begin position="669"/>
        <end position="672"/>
    </location>
</feature>
<feature type="helix" evidence="19">
    <location>
        <begin position="675"/>
        <end position="681"/>
    </location>
</feature>
<feature type="strand" evidence="16">
    <location>
        <begin position="685"/>
        <end position="688"/>
    </location>
</feature>
<feature type="strand" evidence="19">
    <location>
        <begin position="690"/>
        <end position="695"/>
    </location>
</feature>
<feature type="strand" evidence="18">
    <location>
        <begin position="697"/>
        <end position="700"/>
    </location>
</feature>
<feature type="strand" evidence="19">
    <location>
        <begin position="701"/>
        <end position="708"/>
    </location>
</feature>
<feature type="strand" evidence="19">
    <location>
        <begin position="711"/>
        <end position="720"/>
    </location>
</feature>
<feature type="strand" evidence="19">
    <location>
        <begin position="723"/>
        <end position="726"/>
    </location>
</feature>
<feature type="strand" evidence="19">
    <location>
        <begin position="729"/>
        <end position="733"/>
    </location>
</feature>
<feature type="helix" evidence="19">
    <location>
        <begin position="734"/>
        <end position="743"/>
    </location>
</feature>
<feature type="strand" evidence="17">
    <location>
        <begin position="746"/>
        <end position="749"/>
    </location>
</feature>
<dbReference type="EC" id="3.1.4.11" evidence="2"/>
<dbReference type="EMBL" id="Y00301">
    <property type="protein sequence ID" value="CAA68406.1"/>
    <property type="molecule type" value="mRNA"/>
</dbReference>
<dbReference type="PIR" id="S00666">
    <property type="entry name" value="S00666"/>
</dbReference>
<dbReference type="RefSeq" id="NP_776850.1">
    <property type="nucleotide sequence ID" value="NM_174425.3"/>
</dbReference>
<dbReference type="PDB" id="2FCI">
    <property type="method" value="NMR"/>
    <property type="chains" value="A=663-759"/>
</dbReference>
<dbReference type="PDB" id="2PLD">
    <property type="method" value="NMR"/>
    <property type="chains" value="A=663-759"/>
</dbReference>
<dbReference type="PDB" id="2PLE">
    <property type="method" value="NMR"/>
    <property type="chains" value="A=663-759"/>
</dbReference>
<dbReference type="PDB" id="5TNW">
    <property type="method" value="X-ray"/>
    <property type="resolution" value="1.40 A"/>
    <property type="chains" value="A/B=663-759"/>
</dbReference>
<dbReference type="PDB" id="5TO4">
    <property type="method" value="X-ray"/>
    <property type="resolution" value="1.70 A"/>
    <property type="chains" value="A=663-759"/>
</dbReference>
<dbReference type="PDB" id="5TQ1">
    <property type="method" value="X-ray"/>
    <property type="resolution" value="1.49 A"/>
    <property type="chains" value="A=663-759"/>
</dbReference>
<dbReference type="PDB" id="5TQS">
    <property type="method" value="X-ray"/>
    <property type="resolution" value="1.88 A"/>
    <property type="chains" value="A/B/C/D=663-759"/>
</dbReference>
<dbReference type="PDBsum" id="2FCI"/>
<dbReference type="PDBsum" id="2PLD"/>
<dbReference type="PDBsum" id="2PLE"/>
<dbReference type="PDBsum" id="5TNW"/>
<dbReference type="PDBsum" id="5TO4"/>
<dbReference type="PDBsum" id="5TQ1"/>
<dbReference type="PDBsum" id="5TQS"/>
<dbReference type="SMR" id="P08487"/>
<dbReference type="BioGRID" id="159276">
    <property type="interactions" value="1"/>
</dbReference>
<dbReference type="DIP" id="DIP-42760N"/>
<dbReference type="FunCoup" id="P08487">
    <property type="interactions" value="2435"/>
</dbReference>
<dbReference type="IntAct" id="P08487">
    <property type="interactions" value="9"/>
</dbReference>
<dbReference type="MINT" id="P08487"/>
<dbReference type="STRING" id="9913.ENSBTAP00000023383"/>
<dbReference type="BindingDB" id="P08487"/>
<dbReference type="ChEMBL" id="CHEMBL5566"/>
<dbReference type="iPTMnet" id="P08487"/>
<dbReference type="PaxDb" id="9913-ENSBTAP00000023383"/>
<dbReference type="GeneID" id="281987"/>
<dbReference type="KEGG" id="bta:281987"/>
<dbReference type="CTD" id="5335"/>
<dbReference type="eggNOG" id="KOG1264">
    <property type="taxonomic scope" value="Eukaryota"/>
</dbReference>
<dbReference type="InParanoid" id="P08487"/>
<dbReference type="OrthoDB" id="269822at2759"/>
<dbReference type="EvolutionaryTrace" id="P08487"/>
<dbReference type="PRO" id="PR:P08487"/>
<dbReference type="Proteomes" id="UP000009136">
    <property type="component" value="Unplaced"/>
</dbReference>
<dbReference type="GO" id="GO:0008180">
    <property type="term" value="C:COP9 signalosome"/>
    <property type="evidence" value="ECO:0000250"/>
    <property type="project" value="UniProtKB"/>
</dbReference>
<dbReference type="GO" id="GO:0005737">
    <property type="term" value="C:cytoplasm"/>
    <property type="evidence" value="ECO:0000314"/>
    <property type="project" value="ARUK-UCL"/>
</dbReference>
<dbReference type="GO" id="GO:0030027">
    <property type="term" value="C:lamellipodium"/>
    <property type="evidence" value="ECO:0000250"/>
    <property type="project" value="UniProtKB"/>
</dbReference>
<dbReference type="GO" id="GO:0005886">
    <property type="term" value="C:plasma membrane"/>
    <property type="evidence" value="ECO:0000314"/>
    <property type="project" value="ARUK-UCL"/>
</dbReference>
<dbReference type="GO" id="GO:0001726">
    <property type="term" value="C:ruffle"/>
    <property type="evidence" value="ECO:0000250"/>
    <property type="project" value="UniProtKB"/>
</dbReference>
<dbReference type="GO" id="GO:0032587">
    <property type="term" value="C:ruffle membrane"/>
    <property type="evidence" value="ECO:0000318"/>
    <property type="project" value="GO_Central"/>
</dbReference>
<dbReference type="GO" id="GO:0005509">
    <property type="term" value="F:calcium ion binding"/>
    <property type="evidence" value="ECO:0007669"/>
    <property type="project" value="InterPro"/>
</dbReference>
<dbReference type="GO" id="GO:0050429">
    <property type="term" value="F:calcium-dependent phospholipase C activity"/>
    <property type="evidence" value="ECO:0000250"/>
    <property type="project" value="UniProtKB"/>
</dbReference>
<dbReference type="GO" id="GO:0005085">
    <property type="term" value="F:guanyl-nucleotide exchange factor activity"/>
    <property type="evidence" value="ECO:0000250"/>
    <property type="project" value="UniProtKB"/>
</dbReference>
<dbReference type="GO" id="GO:0004435">
    <property type="term" value="F:phosphatidylinositol-4,5-bisphosphate phospholipase C activity"/>
    <property type="evidence" value="ECO:0000250"/>
    <property type="project" value="UniProtKB"/>
</dbReference>
<dbReference type="GO" id="GO:0071364">
    <property type="term" value="P:cellular response to epidermal growth factor stimulus"/>
    <property type="evidence" value="ECO:0000250"/>
    <property type="project" value="UniProtKB"/>
</dbReference>
<dbReference type="GO" id="GO:0035924">
    <property type="term" value="P:cellular response to vascular endothelial growth factor stimulus"/>
    <property type="evidence" value="ECO:0000314"/>
    <property type="project" value="BHF-UCL"/>
</dbReference>
<dbReference type="GO" id="GO:0007173">
    <property type="term" value="P:epidermal growth factor receptor signaling pathway"/>
    <property type="evidence" value="ECO:0000250"/>
    <property type="project" value="UniProtKB"/>
</dbReference>
<dbReference type="GO" id="GO:0001701">
    <property type="term" value="P:in utero embryonic development"/>
    <property type="evidence" value="ECO:0000250"/>
    <property type="project" value="AgBase"/>
</dbReference>
<dbReference type="GO" id="GO:0046488">
    <property type="term" value="P:phosphatidylinositol metabolic process"/>
    <property type="evidence" value="ECO:0000250"/>
    <property type="project" value="UniProtKB"/>
</dbReference>
<dbReference type="GO" id="GO:0048015">
    <property type="term" value="P:phosphatidylinositol-mediated signaling"/>
    <property type="evidence" value="ECO:0000318"/>
    <property type="project" value="GO_Central"/>
</dbReference>
<dbReference type="GO" id="GO:0009395">
    <property type="term" value="P:phospholipid catabolic process"/>
    <property type="evidence" value="ECO:0007669"/>
    <property type="project" value="InterPro"/>
</dbReference>
<dbReference type="GO" id="GO:0010634">
    <property type="term" value="P:positive regulation of epithelial cell migration"/>
    <property type="evidence" value="ECO:0000250"/>
    <property type="project" value="UniProtKB"/>
</dbReference>
<dbReference type="GO" id="GO:0051209">
    <property type="term" value="P:release of sequestered calcium ion into cytosol"/>
    <property type="evidence" value="ECO:0000318"/>
    <property type="project" value="GO_Central"/>
</dbReference>
<dbReference type="CDD" id="cd00275">
    <property type="entry name" value="C2_PLC_like"/>
    <property type="match status" value="1"/>
</dbReference>
<dbReference type="CDD" id="cd16214">
    <property type="entry name" value="EFh_PI-PLCgamma1"/>
    <property type="match status" value="1"/>
</dbReference>
<dbReference type="CDD" id="cd13362">
    <property type="entry name" value="PH_PLC_gamma"/>
    <property type="match status" value="1"/>
</dbReference>
<dbReference type="CDD" id="cd13234">
    <property type="entry name" value="PHsplit_PLC_gamma"/>
    <property type="match status" value="1"/>
</dbReference>
<dbReference type="CDD" id="cd08592">
    <property type="entry name" value="PI-PLCc_gamma"/>
    <property type="match status" value="1"/>
</dbReference>
<dbReference type="CDD" id="cd09932">
    <property type="entry name" value="SH2_C-SH2_PLC_gamma_like"/>
    <property type="match status" value="1"/>
</dbReference>
<dbReference type="CDD" id="cd10341">
    <property type="entry name" value="SH2_N-SH2_PLC_gamma_like"/>
    <property type="match status" value="1"/>
</dbReference>
<dbReference type="CDD" id="cd11970">
    <property type="entry name" value="SH3_PLCgamma1"/>
    <property type="match status" value="1"/>
</dbReference>
<dbReference type="FunFam" id="2.30.29.30:FF:000155">
    <property type="entry name" value="1-phosphatidylinositol 4,5-bisphosphate phosphodiesterase gamma"/>
    <property type="match status" value="1"/>
</dbReference>
<dbReference type="FunFam" id="2.30.30.40:FF:000051">
    <property type="entry name" value="1-phosphatidylinositol 4,5-bisphosphate phosphodiesterase gamma"/>
    <property type="match status" value="1"/>
</dbReference>
<dbReference type="FunFam" id="2.60.40.150:FF:000067">
    <property type="entry name" value="1-phosphatidylinositol 4,5-bisphosphate phosphodiesterase gamma"/>
    <property type="match status" value="1"/>
</dbReference>
<dbReference type="FunFam" id="3.20.20.190:FF:000004">
    <property type="entry name" value="1-phosphatidylinositol 4,5-bisphosphate phosphodiesterase gamma"/>
    <property type="match status" value="1"/>
</dbReference>
<dbReference type="FunFam" id="3.20.20.190:FF:000007">
    <property type="entry name" value="1-phosphatidylinositol 4,5-bisphosphate phosphodiesterase gamma"/>
    <property type="match status" value="1"/>
</dbReference>
<dbReference type="FunFam" id="3.30.505.10:FF:000009">
    <property type="entry name" value="1-phosphatidylinositol 4,5-bisphosphate phosphodiesterase gamma"/>
    <property type="match status" value="1"/>
</dbReference>
<dbReference type="FunFam" id="3.30.505.10:FF:000011">
    <property type="entry name" value="1-phosphatidylinositol 4,5-bisphosphate phosphodiesterase gamma"/>
    <property type="match status" value="1"/>
</dbReference>
<dbReference type="Gene3D" id="2.60.40.150">
    <property type="entry name" value="C2 domain"/>
    <property type="match status" value="1"/>
</dbReference>
<dbReference type="Gene3D" id="3.20.20.190">
    <property type="entry name" value="Phosphatidylinositol (PI) phosphodiesterase"/>
    <property type="match status" value="2"/>
</dbReference>
<dbReference type="Gene3D" id="2.30.29.30">
    <property type="entry name" value="Pleckstrin-homology domain (PH domain)/Phosphotyrosine-binding domain (PTB)"/>
    <property type="match status" value="1"/>
</dbReference>
<dbReference type="Gene3D" id="3.30.505.10">
    <property type="entry name" value="SH2 domain"/>
    <property type="match status" value="2"/>
</dbReference>
<dbReference type="Gene3D" id="2.30.30.40">
    <property type="entry name" value="SH3 Domains"/>
    <property type="match status" value="1"/>
</dbReference>
<dbReference type="InterPro" id="IPR000008">
    <property type="entry name" value="C2_dom"/>
</dbReference>
<dbReference type="InterPro" id="IPR035892">
    <property type="entry name" value="C2_domain_sf"/>
</dbReference>
<dbReference type="InterPro" id="IPR011992">
    <property type="entry name" value="EF-hand-dom_pair"/>
</dbReference>
<dbReference type="InterPro" id="IPR018247">
    <property type="entry name" value="EF_Hand_1_Ca_BS"/>
</dbReference>
<dbReference type="InterPro" id="IPR002048">
    <property type="entry name" value="EF_hand_dom"/>
</dbReference>
<dbReference type="InterPro" id="IPR011993">
    <property type="entry name" value="PH-like_dom_sf"/>
</dbReference>
<dbReference type="InterPro" id="IPR001849">
    <property type="entry name" value="PH_domain"/>
</dbReference>
<dbReference type="InterPro" id="IPR001192">
    <property type="entry name" value="PI-PLC_fam"/>
</dbReference>
<dbReference type="InterPro" id="IPR016279">
    <property type="entry name" value="PLC-gamma"/>
</dbReference>
<dbReference type="InterPro" id="IPR035023">
    <property type="entry name" value="PLC-gamma_C-SH2"/>
</dbReference>
<dbReference type="InterPro" id="IPR035024">
    <property type="entry name" value="PLC-gamma_N-SH2"/>
</dbReference>
<dbReference type="InterPro" id="IPR017946">
    <property type="entry name" value="PLC-like_Pdiesterase_TIM-brl"/>
</dbReference>
<dbReference type="InterPro" id="IPR057061">
    <property type="entry name" value="PLCG_EF-hand_2"/>
</dbReference>
<dbReference type="InterPro" id="IPR035724">
    <property type="entry name" value="PLCgamma1_SH3"/>
</dbReference>
<dbReference type="InterPro" id="IPR000909">
    <property type="entry name" value="PLipase_C_PInositol-sp_X_dom"/>
</dbReference>
<dbReference type="InterPro" id="IPR001711">
    <property type="entry name" value="PLipase_C_Pinositol-sp_Y"/>
</dbReference>
<dbReference type="InterPro" id="IPR000980">
    <property type="entry name" value="SH2"/>
</dbReference>
<dbReference type="InterPro" id="IPR036860">
    <property type="entry name" value="SH2_dom_sf"/>
</dbReference>
<dbReference type="InterPro" id="IPR036028">
    <property type="entry name" value="SH3-like_dom_sf"/>
</dbReference>
<dbReference type="InterPro" id="IPR001452">
    <property type="entry name" value="SH3_domain"/>
</dbReference>
<dbReference type="PANTHER" id="PTHR10336:SF173">
    <property type="entry name" value="1-PHOSPHATIDYLINOSITOL 4,5-BISPHOSPHATE PHOSPHODIESTERASE GAMMA-1"/>
    <property type="match status" value="1"/>
</dbReference>
<dbReference type="PANTHER" id="PTHR10336">
    <property type="entry name" value="PHOSPHOINOSITIDE-SPECIFIC PHOSPHOLIPASE C FAMILY PROTEIN"/>
    <property type="match status" value="1"/>
</dbReference>
<dbReference type="Pfam" id="PF00168">
    <property type="entry name" value="C2"/>
    <property type="match status" value="1"/>
</dbReference>
<dbReference type="Pfam" id="PF23329">
    <property type="entry name" value="EF_HAND_1_PLCG"/>
    <property type="match status" value="1"/>
</dbReference>
<dbReference type="Pfam" id="PF23583">
    <property type="entry name" value="EF_HAND_2_PLCG"/>
    <property type="match status" value="1"/>
</dbReference>
<dbReference type="Pfam" id="PF00169">
    <property type="entry name" value="PH"/>
    <property type="match status" value="1"/>
</dbReference>
<dbReference type="Pfam" id="PF00388">
    <property type="entry name" value="PI-PLC-X"/>
    <property type="match status" value="1"/>
</dbReference>
<dbReference type="Pfam" id="PF00387">
    <property type="entry name" value="PI-PLC-Y"/>
    <property type="match status" value="1"/>
</dbReference>
<dbReference type="Pfam" id="PF00017">
    <property type="entry name" value="SH2"/>
    <property type="match status" value="2"/>
</dbReference>
<dbReference type="Pfam" id="PF00018">
    <property type="entry name" value="SH3_1"/>
    <property type="match status" value="1"/>
</dbReference>
<dbReference type="PIRSF" id="PIRSF000952">
    <property type="entry name" value="PLC-gamma"/>
    <property type="match status" value="1"/>
</dbReference>
<dbReference type="PRINTS" id="PR00390">
    <property type="entry name" value="PHPHLIPASEC"/>
</dbReference>
<dbReference type="PRINTS" id="PR00401">
    <property type="entry name" value="SH2DOMAIN"/>
</dbReference>
<dbReference type="PRINTS" id="PR00452">
    <property type="entry name" value="SH3DOMAIN"/>
</dbReference>
<dbReference type="SMART" id="SM00239">
    <property type="entry name" value="C2"/>
    <property type="match status" value="1"/>
</dbReference>
<dbReference type="SMART" id="SM00233">
    <property type="entry name" value="PH"/>
    <property type="match status" value="3"/>
</dbReference>
<dbReference type="SMART" id="SM00148">
    <property type="entry name" value="PLCXc"/>
    <property type="match status" value="1"/>
</dbReference>
<dbReference type="SMART" id="SM00149">
    <property type="entry name" value="PLCYc"/>
    <property type="match status" value="1"/>
</dbReference>
<dbReference type="SMART" id="SM00252">
    <property type="entry name" value="SH2"/>
    <property type="match status" value="2"/>
</dbReference>
<dbReference type="SMART" id="SM00326">
    <property type="entry name" value="SH3"/>
    <property type="match status" value="1"/>
</dbReference>
<dbReference type="SUPFAM" id="SSF49562">
    <property type="entry name" value="C2 domain (Calcium/lipid-binding domain, CaLB)"/>
    <property type="match status" value="1"/>
</dbReference>
<dbReference type="SUPFAM" id="SSF47473">
    <property type="entry name" value="EF-hand"/>
    <property type="match status" value="1"/>
</dbReference>
<dbReference type="SUPFAM" id="SSF50729">
    <property type="entry name" value="PH domain-like"/>
    <property type="match status" value="1"/>
</dbReference>
<dbReference type="SUPFAM" id="SSF51695">
    <property type="entry name" value="PLC-like phosphodiesterases"/>
    <property type="match status" value="1"/>
</dbReference>
<dbReference type="SUPFAM" id="SSF55550">
    <property type="entry name" value="SH2 domain"/>
    <property type="match status" value="2"/>
</dbReference>
<dbReference type="SUPFAM" id="SSF50044">
    <property type="entry name" value="SH3-domain"/>
    <property type="match status" value="1"/>
</dbReference>
<dbReference type="PROSITE" id="PS50004">
    <property type="entry name" value="C2"/>
    <property type="match status" value="1"/>
</dbReference>
<dbReference type="PROSITE" id="PS00018">
    <property type="entry name" value="EF_HAND_1"/>
    <property type="match status" value="1"/>
</dbReference>
<dbReference type="PROSITE" id="PS50222">
    <property type="entry name" value="EF_HAND_2"/>
    <property type="match status" value="1"/>
</dbReference>
<dbReference type="PROSITE" id="PS50003">
    <property type="entry name" value="PH_DOMAIN"/>
    <property type="match status" value="2"/>
</dbReference>
<dbReference type="PROSITE" id="PS50007">
    <property type="entry name" value="PIPLC_X_DOMAIN"/>
    <property type="match status" value="1"/>
</dbReference>
<dbReference type="PROSITE" id="PS50008">
    <property type="entry name" value="PIPLC_Y_DOMAIN"/>
    <property type="match status" value="1"/>
</dbReference>
<dbReference type="PROSITE" id="PS50001">
    <property type="entry name" value="SH2"/>
    <property type="match status" value="2"/>
</dbReference>
<dbReference type="PROSITE" id="PS50002">
    <property type="entry name" value="SH3"/>
    <property type="match status" value="1"/>
</dbReference>
<protein>
    <recommendedName>
        <fullName evidence="3">1-phosphatidylinositol 4,5-bisphosphate phosphodiesterase gamma-1</fullName>
        <ecNumber evidence="2">3.1.4.11</ecNumber>
    </recommendedName>
    <alternativeName>
        <fullName>PLC-148</fullName>
    </alternativeName>
    <alternativeName>
        <fullName>Phosphoinositide phospholipase C-gamma-1</fullName>
    </alternativeName>
    <alternativeName>
        <fullName>Phospholipase C-II</fullName>
        <shortName>PLC-II</shortName>
    </alternativeName>
    <alternativeName>
        <fullName>Phospholipase C-gamma-1</fullName>
        <shortName>PLC-gamma-1</shortName>
    </alternativeName>
</protein>
<reference key="1">
    <citation type="journal article" date="1988" name="Nature">
        <title>Sequence similarity of phospholipase C with the non-catalytic region of src.</title>
        <authorList>
            <person name="Stahl M.L."/>
            <person name="Ferenz C.R."/>
            <person name="Kelleher K.L."/>
            <person name="Kriz R.W."/>
            <person name="Knopf J.L."/>
        </authorList>
    </citation>
    <scope>NUCLEOTIDE SEQUENCE [MRNA]</scope>
    <scope>PARTIAL PROTEIN SEQUENCE</scope>
</reference>
<reference key="2">
    <citation type="journal article" date="1990" name="J. Biol. Chem.">
        <title>Tyrosine residues in bovine phospholipase C-gamma phosphorylated by the epidermal growth factor receptor in vitro.</title>
        <authorList>
            <person name="Kim J.W."/>
            <person name="Sim S.S."/>
            <person name="Kim U.H."/>
            <person name="Nishibe S."/>
            <person name="Whal M.I."/>
            <person name="Carpenter G."/>
            <person name="Rhee S.G."/>
        </authorList>
    </citation>
    <scope>PHOSPHORYLATION AT TYR-771; TYR-783 AND TYR-1254</scope>
</reference>
<reference key="3">
    <citation type="journal article" date="1990" name="J. Biol. Chem.">
        <title>Identification of two epidermal growth factor-sensitive tyrosine phosphorylation sites of phospholipase C-gamma in intact HSC-1 cells.</title>
        <authorList>
            <person name="Whal M.I."/>
            <person name="Nishibe S."/>
            <person name="Kim J.W."/>
            <person name="Kim H.K."/>
            <person name="Rhee S.G."/>
            <person name="Carpenter G."/>
        </authorList>
    </citation>
    <scope>PHOSPHORYLATION AT TYR-771; TYR-783 AND TYR-1254</scope>
</reference>
<reference key="4">
    <citation type="journal article" date="1990" name="Science">
        <title>Binding of SH2 domains of phospholipase C gamma 1, GAP, and Src to activated growth factor receptors.</title>
        <authorList>
            <person name="Anderson D."/>
            <person name="Koch C.A."/>
            <person name="Grey L."/>
            <person name="Ellis C."/>
            <person name="Moran M.F."/>
            <person name="Pawson T."/>
        </authorList>
    </citation>
    <scope>INTERACTION WITH PDGFRA</scope>
</reference>
<reference key="5">
    <citation type="journal article" date="1991" name="Cell">
        <title>PDGF stimulation of inositol phospholipid hydrolysis requires PLC-gamma 1 phosphorylation on tyrosine residues 783 and 1254.</title>
        <authorList>
            <person name="Kim H.K."/>
            <person name="Kim J.W."/>
            <person name="Zilberstein A."/>
            <person name="Margolis B."/>
            <person name="Kim J.G."/>
            <person name="Schlessinger J."/>
            <person name="Rhee S.G."/>
        </authorList>
    </citation>
    <scope>PHOSPHORYLATION AT TYR-783 AND TYR-1254</scope>
</reference>
<reference key="6">
    <citation type="journal article" date="1996" name="J. Biol. Chem.">
        <title>Direct association between the Ret receptor tyrosine kinase and the Src homology 2-containing adapter protein Grb7.</title>
        <authorList>
            <person name="Pandey A."/>
            <person name="Liu X."/>
            <person name="Dixon J.E."/>
            <person name="Di Fiore P.P."/>
            <person name="Dixit V.M."/>
        </authorList>
    </citation>
    <scope>INTERACTION WITH RET</scope>
</reference>
<reference key="7">
    <citation type="journal article" date="1994" name="Cell">
        <title>Nuclear magnetic resonance structure of an SH2 domain of phospholipase C-gamma 1 complexed with a high affinity binding peptide.</title>
        <authorList>
            <person name="Pascal S.M."/>
            <person name="Singer A.U."/>
            <person name="Gish G."/>
            <person name="Yamazaki T."/>
            <person name="Shoelson S.E."/>
            <person name="Pawson T."/>
            <person name="Kay L.E."/>
            <person name="Forman-Kay J.D."/>
        </authorList>
    </citation>
    <scope>STRUCTURE BY NMR OF 663-759</scope>
</reference>
<gene>
    <name evidence="3" type="primary">PLCG1</name>
</gene>
<proteinExistence type="evidence at protein level"/>
<keyword id="KW-0002">3D-structure</keyword>
<keyword id="KW-0007">Acetylation</keyword>
<keyword id="KW-0106">Calcium</keyword>
<keyword id="KW-0966">Cell projection</keyword>
<keyword id="KW-0903">Direct protein sequencing</keyword>
<keyword id="KW-0378">Hydrolase</keyword>
<keyword id="KW-0442">Lipid degradation</keyword>
<keyword id="KW-0443">Lipid metabolism</keyword>
<keyword id="KW-0479">Metal-binding</keyword>
<keyword id="KW-0597">Phosphoprotein</keyword>
<keyword id="KW-1185">Reference proteome</keyword>
<keyword id="KW-0677">Repeat</keyword>
<keyword id="KW-0727">SH2 domain</keyword>
<keyword id="KW-0728">SH3 domain</keyword>
<keyword id="KW-0807">Transducer</keyword>
<keyword id="KW-0832">Ubl conjugation</keyword>
<name>PLCG1_BOVIN</name>